<comment type="function">
    <text evidence="1">NDH-1 shuttles electrons from an unknown electron donor, via FMN and iron-sulfur (Fe-S) centers, to quinones in the respiratory and/or the photosynthetic chain. The immediate electron acceptor for the enzyme in this species is believed to be plastoquinone. Couples the redox reaction to proton translocation, and thus conserves the redox energy in a proton gradient. Cyanobacterial NDH-1 also plays a role in inorganic carbon-concentration.</text>
</comment>
<comment type="catalytic activity">
    <reaction evidence="1">
        <text>a plastoquinone + NADH + (n+1) H(+)(in) = a plastoquinol + NAD(+) + n H(+)(out)</text>
        <dbReference type="Rhea" id="RHEA:42608"/>
        <dbReference type="Rhea" id="RHEA-COMP:9561"/>
        <dbReference type="Rhea" id="RHEA-COMP:9562"/>
        <dbReference type="ChEBI" id="CHEBI:15378"/>
        <dbReference type="ChEBI" id="CHEBI:17757"/>
        <dbReference type="ChEBI" id="CHEBI:57540"/>
        <dbReference type="ChEBI" id="CHEBI:57945"/>
        <dbReference type="ChEBI" id="CHEBI:62192"/>
    </reaction>
</comment>
<comment type="catalytic activity">
    <reaction evidence="1">
        <text>a plastoquinone + NADPH + (n+1) H(+)(in) = a plastoquinol + NADP(+) + n H(+)(out)</text>
        <dbReference type="Rhea" id="RHEA:42612"/>
        <dbReference type="Rhea" id="RHEA-COMP:9561"/>
        <dbReference type="Rhea" id="RHEA-COMP:9562"/>
        <dbReference type="ChEBI" id="CHEBI:15378"/>
        <dbReference type="ChEBI" id="CHEBI:17757"/>
        <dbReference type="ChEBI" id="CHEBI:57783"/>
        <dbReference type="ChEBI" id="CHEBI:58349"/>
        <dbReference type="ChEBI" id="CHEBI:62192"/>
    </reaction>
</comment>
<comment type="subunit">
    <text evidence="1">NDH-1 can be composed of about 15 different subunits; different subcomplexes with different compositions have been identified which probably have different functions.</text>
</comment>
<comment type="subcellular location">
    <subcellularLocation>
        <location evidence="1">Cellular thylakoid membrane</location>
        <topology evidence="1">Peripheral membrane protein</topology>
        <orientation evidence="1">Cytoplasmic side</orientation>
    </subcellularLocation>
</comment>
<comment type="similarity">
    <text evidence="1">Belongs to the complex I 49 kDa subunit family.</text>
</comment>
<name>NDHH_PROMA</name>
<proteinExistence type="inferred from homology"/>
<accession>Q7VE17</accession>
<protein>
    <recommendedName>
        <fullName evidence="1">NAD(P)H-quinone oxidoreductase subunit H</fullName>
        <ecNumber evidence="1">7.1.1.-</ecNumber>
    </recommendedName>
    <alternativeName>
        <fullName>NAD(P)H dehydrogenase subunit H</fullName>
    </alternativeName>
    <alternativeName>
        <fullName evidence="1">NADH-plastoquinone oxidoreductase subunit H</fullName>
    </alternativeName>
    <alternativeName>
        <fullName evidence="1">NDH-1 subunit H</fullName>
        <shortName evidence="1">NDH-H</shortName>
    </alternativeName>
</protein>
<organism>
    <name type="scientific">Prochlorococcus marinus (strain SARG / CCMP1375 / SS120)</name>
    <dbReference type="NCBI Taxonomy" id="167539"/>
    <lineage>
        <taxon>Bacteria</taxon>
        <taxon>Bacillati</taxon>
        <taxon>Cyanobacteriota</taxon>
        <taxon>Cyanophyceae</taxon>
        <taxon>Synechococcales</taxon>
        <taxon>Prochlorococcaceae</taxon>
        <taxon>Prochlorococcus</taxon>
    </lineage>
</organism>
<evidence type="ECO:0000255" key="1">
    <source>
        <dbReference type="HAMAP-Rule" id="MF_01358"/>
    </source>
</evidence>
<reference key="1">
    <citation type="journal article" date="2003" name="Proc. Natl. Acad. Sci. U.S.A.">
        <title>Genome sequence of the cyanobacterium Prochlorococcus marinus SS120, a nearly minimal oxyphototrophic genome.</title>
        <authorList>
            <person name="Dufresne A."/>
            <person name="Salanoubat M."/>
            <person name="Partensky F."/>
            <person name="Artiguenave F."/>
            <person name="Axmann I.M."/>
            <person name="Barbe V."/>
            <person name="Duprat S."/>
            <person name="Galperin M.Y."/>
            <person name="Koonin E.V."/>
            <person name="Le Gall F."/>
            <person name="Makarova K.S."/>
            <person name="Ostrowski M."/>
            <person name="Oztas S."/>
            <person name="Robert C."/>
            <person name="Rogozin I.B."/>
            <person name="Scanlan D.J."/>
            <person name="Tandeau de Marsac N."/>
            <person name="Weissenbach J."/>
            <person name="Wincker P."/>
            <person name="Wolf Y.I."/>
            <person name="Hess W.R."/>
        </authorList>
    </citation>
    <scope>NUCLEOTIDE SEQUENCE [LARGE SCALE GENOMIC DNA]</scope>
    <source>
        <strain>SARG / CCMP1375 / SS120</strain>
    </source>
</reference>
<gene>
    <name evidence="1" type="primary">ndhH</name>
    <name type="ordered locus">Pro_0197</name>
</gene>
<sequence>MSQLETRTEPMVVNFGPHHPSMHGVLRLVVTLDGEDVIDCEPVIGYLHRGMEKIAENRTNVMFVPYVSRMDYAAGMFYEAIVVNAPERLANISIPKRASYIRVLMLELNRIANHLLWLGPFLADVGAQTPFFYIFREREMIYDLWEAATGQRLINNNFFRIGGVACDLPWGWLEKCKDFCDWFGPKIDEYEKLITNNPIFRRRIEGLGSISKEKAINWSLSGPMLRASGVPWDLRKVDHYECYDDFDWNIAIAEEGDCYARYRVRIEEMRQSLRILRQACEMIPGGPTENLEASRIAEGKNSPFAGFDFQYVAKKVAPTFKIPNGELYTRLESGKGEIGVFIQGNNDVTPWRFKIRAADLNNLQILPHILKGAKVADIMAILGSIDVIMGSVDR</sequence>
<feature type="chain" id="PRO_0000371905" description="NAD(P)H-quinone oxidoreductase subunit H">
    <location>
        <begin position="1"/>
        <end position="394"/>
    </location>
</feature>
<dbReference type="EC" id="7.1.1.-" evidence="1"/>
<dbReference type="EMBL" id="AE017126">
    <property type="protein sequence ID" value="AAP99243.1"/>
    <property type="molecule type" value="Genomic_DNA"/>
</dbReference>
<dbReference type="RefSeq" id="NP_874591.1">
    <property type="nucleotide sequence ID" value="NC_005042.1"/>
</dbReference>
<dbReference type="RefSeq" id="WP_011124352.1">
    <property type="nucleotide sequence ID" value="NC_005042.1"/>
</dbReference>
<dbReference type="SMR" id="Q7VE17"/>
<dbReference type="STRING" id="167539.Pro_0197"/>
<dbReference type="EnsemblBacteria" id="AAP99243">
    <property type="protein sequence ID" value="AAP99243"/>
    <property type="gene ID" value="Pro_0197"/>
</dbReference>
<dbReference type="KEGG" id="pma:Pro_0197"/>
<dbReference type="PATRIC" id="fig|167539.5.peg.204"/>
<dbReference type="eggNOG" id="COG0649">
    <property type="taxonomic scope" value="Bacteria"/>
</dbReference>
<dbReference type="HOGENOM" id="CLU_015134_1_2_3"/>
<dbReference type="OrthoDB" id="9801496at2"/>
<dbReference type="Proteomes" id="UP000001420">
    <property type="component" value="Chromosome"/>
</dbReference>
<dbReference type="GO" id="GO:0031676">
    <property type="term" value="C:plasma membrane-derived thylakoid membrane"/>
    <property type="evidence" value="ECO:0007669"/>
    <property type="project" value="UniProtKB-SubCell"/>
</dbReference>
<dbReference type="GO" id="GO:0051287">
    <property type="term" value="F:NAD binding"/>
    <property type="evidence" value="ECO:0007669"/>
    <property type="project" value="InterPro"/>
</dbReference>
<dbReference type="GO" id="GO:0016655">
    <property type="term" value="F:oxidoreductase activity, acting on NAD(P)H, quinone or similar compound as acceptor"/>
    <property type="evidence" value="ECO:0007669"/>
    <property type="project" value="UniProtKB-UniRule"/>
</dbReference>
<dbReference type="GO" id="GO:0048038">
    <property type="term" value="F:quinone binding"/>
    <property type="evidence" value="ECO:0007669"/>
    <property type="project" value="UniProtKB-KW"/>
</dbReference>
<dbReference type="GO" id="GO:0019684">
    <property type="term" value="P:photosynthesis, light reaction"/>
    <property type="evidence" value="ECO:0007669"/>
    <property type="project" value="UniProtKB-UniRule"/>
</dbReference>
<dbReference type="Gene3D" id="1.10.645.10">
    <property type="entry name" value="Cytochrome-c3 Hydrogenase, chain B"/>
    <property type="match status" value="1"/>
</dbReference>
<dbReference type="HAMAP" id="MF_01358">
    <property type="entry name" value="NDH1_NuoD"/>
    <property type="match status" value="1"/>
</dbReference>
<dbReference type="InterPro" id="IPR001135">
    <property type="entry name" value="NADH_Q_OxRdtase_suD"/>
</dbReference>
<dbReference type="InterPro" id="IPR014029">
    <property type="entry name" value="NADH_UbQ_OxRdtase_49kDa_CS"/>
</dbReference>
<dbReference type="InterPro" id="IPR022885">
    <property type="entry name" value="NDH1_su_D/H"/>
</dbReference>
<dbReference type="InterPro" id="IPR029014">
    <property type="entry name" value="NiFe-Hase_large"/>
</dbReference>
<dbReference type="NCBIfam" id="NF004739">
    <property type="entry name" value="PRK06075.1"/>
    <property type="match status" value="1"/>
</dbReference>
<dbReference type="NCBIfam" id="NF005649">
    <property type="entry name" value="PRK07415.1"/>
    <property type="match status" value="1"/>
</dbReference>
<dbReference type="PANTHER" id="PTHR11993:SF10">
    <property type="entry name" value="NADH DEHYDROGENASE [UBIQUINONE] IRON-SULFUR PROTEIN 2, MITOCHONDRIAL"/>
    <property type="match status" value="1"/>
</dbReference>
<dbReference type="PANTHER" id="PTHR11993">
    <property type="entry name" value="NADH-UBIQUINONE OXIDOREDUCTASE 49 KDA SUBUNIT"/>
    <property type="match status" value="1"/>
</dbReference>
<dbReference type="Pfam" id="PF00346">
    <property type="entry name" value="Complex1_49kDa"/>
    <property type="match status" value="1"/>
</dbReference>
<dbReference type="SUPFAM" id="SSF56762">
    <property type="entry name" value="HydB/Nqo4-like"/>
    <property type="match status" value="1"/>
</dbReference>
<dbReference type="PROSITE" id="PS00535">
    <property type="entry name" value="COMPLEX1_49K"/>
    <property type="match status" value="1"/>
</dbReference>
<keyword id="KW-0472">Membrane</keyword>
<keyword id="KW-0520">NAD</keyword>
<keyword id="KW-0521">NADP</keyword>
<keyword id="KW-0618">Plastoquinone</keyword>
<keyword id="KW-0874">Quinone</keyword>
<keyword id="KW-1185">Reference proteome</keyword>
<keyword id="KW-0793">Thylakoid</keyword>
<keyword id="KW-1278">Translocase</keyword>
<keyword id="KW-0813">Transport</keyword>